<feature type="chain" id="PRO_0000215359" description="Transient-receptor-potential-like protein">
    <location>
        <begin position="1"/>
        <end position="1124"/>
    </location>
</feature>
<feature type="topological domain" description="Cytoplasmic" evidence="1">
    <location>
        <begin position="1"/>
        <end position="340"/>
    </location>
</feature>
<feature type="transmembrane region" description="Helical" evidence="1">
    <location>
        <begin position="341"/>
        <end position="361"/>
    </location>
</feature>
<feature type="topological domain" description="Extracellular" evidence="1">
    <location>
        <begin position="362"/>
        <end position="373"/>
    </location>
</feature>
<feature type="transmembrane region" description="Helical" evidence="1">
    <location>
        <begin position="374"/>
        <end position="394"/>
    </location>
</feature>
<feature type="topological domain" description="Cytoplasmic" evidence="1">
    <location>
        <begin position="395"/>
        <end position="431"/>
    </location>
</feature>
<feature type="transmembrane region" description="Helical" evidence="1">
    <location>
        <begin position="432"/>
        <end position="452"/>
    </location>
</feature>
<feature type="topological domain" description="Extracellular" evidence="1">
    <location>
        <begin position="453"/>
        <end position="512"/>
    </location>
</feature>
<feature type="transmembrane region" description="Helical" evidence="1">
    <location>
        <begin position="513"/>
        <end position="533"/>
    </location>
</feature>
<feature type="topological domain" description="Cytoplasmic" evidence="1">
    <location>
        <begin position="534"/>
        <end position="548"/>
    </location>
</feature>
<feature type="transmembrane region" description="Helical" evidence="1">
    <location>
        <begin position="549"/>
        <end position="569"/>
    </location>
</feature>
<feature type="topological domain" description="Extracellular" evidence="1">
    <location>
        <begin position="570"/>
        <end position="645"/>
    </location>
</feature>
<feature type="transmembrane region" description="Helical" evidence="1">
    <location>
        <begin position="646"/>
        <end position="666"/>
    </location>
</feature>
<feature type="topological domain" description="Cytoplasmic" evidence="1">
    <location>
        <begin position="667"/>
        <end position="1124"/>
    </location>
</feature>
<feature type="repeat" description="ANK 1">
    <location>
        <begin position="40"/>
        <end position="69"/>
    </location>
</feature>
<feature type="repeat" description="ANK 2">
    <location>
        <begin position="78"/>
        <end position="107"/>
    </location>
</feature>
<feature type="repeat" description="ANK 3">
    <location>
        <begin position="152"/>
        <end position="181"/>
    </location>
</feature>
<feature type="region of interest" description="Disordered" evidence="2">
    <location>
        <begin position="1"/>
        <end position="24"/>
    </location>
</feature>
<feature type="region of interest" description="Calmodulin-binding 1">
    <location>
        <begin position="710"/>
        <end position="728"/>
    </location>
</feature>
<feature type="region of interest" description="Calmodulin-binding 2">
    <location>
        <begin position="853"/>
        <end position="895"/>
    </location>
</feature>
<feature type="region of interest" description="Disordered" evidence="2">
    <location>
        <begin position="978"/>
        <end position="1013"/>
    </location>
</feature>
<feature type="region of interest" description="Disordered" evidence="2">
    <location>
        <begin position="1031"/>
        <end position="1124"/>
    </location>
</feature>
<feature type="compositionally biased region" description="Low complexity" evidence="2">
    <location>
        <begin position="10"/>
        <end position="21"/>
    </location>
</feature>
<feature type="compositionally biased region" description="Low complexity" evidence="2">
    <location>
        <begin position="1035"/>
        <end position="1063"/>
    </location>
</feature>
<feature type="compositionally biased region" description="Basic and acidic residues" evidence="2">
    <location>
        <begin position="1069"/>
        <end position="1081"/>
    </location>
</feature>
<feature type="compositionally biased region" description="Basic and acidic residues" evidence="2">
    <location>
        <begin position="1090"/>
        <end position="1106"/>
    </location>
</feature>
<feature type="compositionally biased region" description="Polar residues" evidence="2">
    <location>
        <begin position="1107"/>
        <end position="1118"/>
    </location>
</feature>
<feature type="mutagenesis site" description="Abolishes interaction with Fkbp59." evidence="5">
    <original>P</original>
    <variation>Q</variation>
    <location>
        <position position="702"/>
    </location>
</feature>
<feature type="mutagenesis site" description="Abolishes interaction with Fkbp59." evidence="5">
    <original>P</original>
    <variation>Q</variation>
    <location>
        <position position="709"/>
    </location>
</feature>
<feature type="mutagenesis site" description="Disrupts Ca(2+) inflow through the channel. Calmodulin has little effect on Ca(2+) flow." evidence="10">
    <original>W</original>
    <variation>G</variation>
    <location>
        <position position="713"/>
    </location>
</feature>
<feature type="mutagenesis site" description="Does not abolish Ca(2+) inflow through the channel. Calmodulin has no effect on initial rates." evidence="10">
    <original>W</original>
    <variation>G</variation>
    <location>
        <position position="814"/>
    </location>
</feature>
<feature type="sequence conflict" description="In Ref. 1; AAA28979." evidence="12" ref="1">
    <original>II</original>
    <variation>SS</variation>
    <location>
        <begin position="228"/>
        <end position="229"/>
    </location>
</feature>
<proteinExistence type="evidence at protein level"/>
<protein>
    <recommendedName>
        <fullName>Transient-receptor-potential-like protein</fullName>
    </recommendedName>
</protein>
<sequence length="1124" mass="127750">MGRKKKLPTGVSSGVSHASSAPKSVGGCCVPLGLPQPLLLEEKKFLLAVERGDMPNVRRILQKALRHQHININCMDPLGRRALTLAIDNENLEMVELLVVMGVETKDALLHAINAEFVEAVELLLEHEELIYKEGEPYSWQKVDINTAMFAPDITPLMLAAHKNNFEILRILLDRGAAVPVPHDIRCGCEECVRLTAEDSLRHSLSRVNIYRALCSPSLICLTSNDPIITAFQLSWELRNLALTEQECKSEYMDLRRQCQKFAVDLLDQTRTSNELAIILNYDPQMSSYEPGDRMSLTRLVQAISYKQKKFVAHSNIQQLLSSIWYDGLPGFRRKSIVDKVICIAQVAVLFPLYCLIYMCAPNCRTGQLMRKPFMKFLIHASSYLFFLFILILVSQRADDDFVRIFGTTRMKKELAEQELRQRGQTPSKLELIVVMYVIGFVWEEVQEIFAVGMKSYLRNMWNFIDFLRNSLYVSVMCLRAFAYIQQATEIARDPQMAYIPREKWHDFDPQLIAEGLFAAANVFSALKLVHLFSINPHLGPLQISLGRMVIDIVKFFFIYTLVLFAFACGLNQLLWYFAALEKSKCYVLPGGEADWGSHGDSCMKWRRFGNLFESSQSLFWASFGMVGLDDFELSGIKSYTRFWGLLMFGSYSVINVIVLLNLLIAMMSNSYAMIDEHSDTEWKFARTKLWMSYFEDSATLPPPFNVLPSVKWVIRIFRKSSKTIDRQRSKKRKEQEQFSEYDNIMRSLVWRYVAAMHRKFENNPVSEDDINEVKSEINTMRYEMLEIFENSGMDVSSANKKERQPRPRRIKVWERRLMKGFQVAPVQNGCELDAFGNVNGQGEMQEIKVESIPSKPAKETAKERFQRVARTVLLQSTTHKWNVVLRAAKDSQIGRCTKNERKSLQNLGRAIEEAKRLIMLNPGCPSGRESPIRIEFEDEKTSTLLELLNQISAEISDSEKPKIRPIWRPPLKTVPARAMAANNTRSLTAPELKISRKSSPAPTPTPTPGVSHTALSQFRNRELPLCPSKLIANSAPSAPTAPPKKSAPTAPTPTYKPTTHAPFSVEGGNRENTRASDGVRSDNSNFDIHVVDLDEKGGHLGRDNVSDISSIASTSPQRPKHRN</sequence>
<keyword id="KW-0040">ANK repeat</keyword>
<keyword id="KW-0106">Calcium</keyword>
<keyword id="KW-0107">Calcium channel</keyword>
<keyword id="KW-0109">Calcium transport</keyword>
<keyword id="KW-0112">Calmodulin-binding</keyword>
<keyword id="KW-1003">Cell membrane</keyword>
<keyword id="KW-0966">Cell projection</keyword>
<keyword id="KW-0407">Ion channel</keyword>
<keyword id="KW-0406">Ion transport</keyword>
<keyword id="KW-0472">Membrane</keyword>
<keyword id="KW-1185">Reference proteome</keyword>
<keyword id="KW-0677">Repeat</keyword>
<keyword id="KW-0716">Sensory transduction</keyword>
<keyword id="KW-0812">Transmembrane</keyword>
<keyword id="KW-1133">Transmembrane helix</keyword>
<keyword id="KW-0813">Transport</keyword>
<keyword id="KW-0844">Vision</keyword>
<dbReference type="EMBL" id="M88185">
    <property type="protein sequence ID" value="AAA28979.1"/>
    <property type="molecule type" value="mRNA"/>
</dbReference>
<dbReference type="EMBL" id="AE013599">
    <property type="protein sequence ID" value="AAF58904.1"/>
    <property type="molecule type" value="Genomic_DNA"/>
</dbReference>
<dbReference type="EMBL" id="AE013599">
    <property type="protein sequence ID" value="AAM68793.1"/>
    <property type="molecule type" value="Genomic_DNA"/>
</dbReference>
<dbReference type="EMBL" id="AE013599">
    <property type="protein sequence ID" value="AAM68794.2"/>
    <property type="molecule type" value="Genomic_DNA"/>
</dbReference>
<dbReference type="EMBL" id="BT001397">
    <property type="protein sequence ID" value="AAN71152.1"/>
    <property type="status" value="ALT_SEQ"/>
    <property type="molecule type" value="mRNA"/>
</dbReference>
<dbReference type="EMBL" id="BT099607">
    <property type="protein sequence ID" value="ACU45760.1"/>
    <property type="molecule type" value="mRNA"/>
</dbReference>
<dbReference type="PIR" id="JH0588">
    <property type="entry name" value="JH0588"/>
</dbReference>
<dbReference type="RefSeq" id="NP_476895.1">
    <property type="nucleotide sequence ID" value="NM_057547.5"/>
</dbReference>
<dbReference type="RefSeq" id="NP_724822.1">
    <property type="nucleotide sequence ID" value="NM_165694.3"/>
</dbReference>
<dbReference type="RefSeq" id="NP_724823.2">
    <property type="nucleotide sequence ID" value="NM_165695.2"/>
</dbReference>
<dbReference type="SMR" id="P48994"/>
<dbReference type="BioGRID" id="61834">
    <property type="interactions" value="10"/>
</dbReference>
<dbReference type="FunCoup" id="P48994">
    <property type="interactions" value="117"/>
</dbReference>
<dbReference type="IntAct" id="P48994">
    <property type="interactions" value="2"/>
</dbReference>
<dbReference type="STRING" id="7227.FBpp0087557"/>
<dbReference type="TCDB" id="1.A.4.1.8">
    <property type="family name" value="the transient receptor potential ca2+/cation channel (trp-cc) family"/>
</dbReference>
<dbReference type="GlyGen" id="P48994">
    <property type="glycosylation" value="4 sites"/>
</dbReference>
<dbReference type="PaxDb" id="7227-FBpp0290876"/>
<dbReference type="EnsemblMetazoa" id="FBtr0088471">
    <property type="protein sequence ID" value="FBpp0087555"/>
    <property type="gene ID" value="FBgn0005614"/>
</dbReference>
<dbReference type="EnsemblMetazoa" id="FBtr0088473">
    <property type="protein sequence ID" value="FBpp0087557"/>
    <property type="gene ID" value="FBgn0005614"/>
</dbReference>
<dbReference type="EnsemblMetazoa" id="FBtr0301662">
    <property type="protein sequence ID" value="FBpp0290876"/>
    <property type="gene ID" value="FBgn0005614"/>
</dbReference>
<dbReference type="GeneID" id="36003"/>
<dbReference type="KEGG" id="dme:Dmel_CG18345"/>
<dbReference type="UCSC" id="CG18345-RA">
    <property type="organism name" value="d. melanogaster"/>
</dbReference>
<dbReference type="AGR" id="FB:FBgn0005614"/>
<dbReference type="CTD" id="36003"/>
<dbReference type="FlyBase" id="FBgn0005614">
    <property type="gene designation" value="trpl"/>
</dbReference>
<dbReference type="VEuPathDB" id="VectorBase:FBgn0005614"/>
<dbReference type="eggNOG" id="KOG3609">
    <property type="taxonomic scope" value="Eukaryota"/>
</dbReference>
<dbReference type="GeneTree" id="ENSGT01060000248594"/>
<dbReference type="HOGENOM" id="CLU_005716_0_1_1"/>
<dbReference type="InParanoid" id="P48994"/>
<dbReference type="OMA" id="CIGQVAV"/>
<dbReference type="OrthoDB" id="2373987at2759"/>
<dbReference type="PhylomeDB" id="P48994"/>
<dbReference type="BioGRID-ORCS" id="36003">
    <property type="hits" value="0 hits in 3 CRISPR screens"/>
</dbReference>
<dbReference type="ChiTaRS" id="trpl">
    <property type="organism name" value="fly"/>
</dbReference>
<dbReference type="GenomeRNAi" id="36003"/>
<dbReference type="PRO" id="PR:P48994"/>
<dbReference type="Proteomes" id="UP000000803">
    <property type="component" value="Chromosome 2R"/>
</dbReference>
<dbReference type="Bgee" id="FBgn0005614">
    <property type="expression patterns" value="Expressed in outer photoreceptor cell (Drosophila) in insect head and 84 other cell types or tissues"/>
</dbReference>
<dbReference type="ExpressionAtlas" id="P48994">
    <property type="expression patterns" value="baseline and differential"/>
</dbReference>
<dbReference type="GO" id="GO:0034703">
    <property type="term" value="C:cation channel complex"/>
    <property type="evidence" value="ECO:0000353"/>
    <property type="project" value="FlyBase"/>
</dbReference>
<dbReference type="GO" id="GO:0030425">
    <property type="term" value="C:dendrite"/>
    <property type="evidence" value="ECO:0000314"/>
    <property type="project" value="FlyBase"/>
</dbReference>
<dbReference type="GO" id="GO:0016027">
    <property type="term" value="C:inaD signaling complex"/>
    <property type="evidence" value="ECO:0000353"/>
    <property type="project" value="UniProtKB"/>
</dbReference>
<dbReference type="GO" id="GO:0016020">
    <property type="term" value="C:membrane"/>
    <property type="evidence" value="ECO:0000303"/>
    <property type="project" value="UniProtKB"/>
</dbReference>
<dbReference type="GO" id="GO:0005886">
    <property type="term" value="C:plasma membrane"/>
    <property type="evidence" value="ECO:0000314"/>
    <property type="project" value="UniProtKB"/>
</dbReference>
<dbReference type="GO" id="GO:0016028">
    <property type="term" value="C:rhabdomere"/>
    <property type="evidence" value="ECO:0000314"/>
    <property type="project" value="FlyBase"/>
</dbReference>
<dbReference type="GO" id="GO:0035997">
    <property type="term" value="C:rhabdomere microvillus membrane"/>
    <property type="evidence" value="ECO:0000314"/>
    <property type="project" value="FlyBase"/>
</dbReference>
<dbReference type="GO" id="GO:0005262">
    <property type="term" value="F:calcium channel activity"/>
    <property type="evidence" value="ECO:0000314"/>
    <property type="project" value="FlyBase"/>
</dbReference>
<dbReference type="GO" id="GO:0005516">
    <property type="term" value="F:calmodulin binding"/>
    <property type="evidence" value="ECO:0000314"/>
    <property type="project" value="UniProtKB"/>
</dbReference>
<dbReference type="GO" id="GO:0042802">
    <property type="term" value="F:identical protein binding"/>
    <property type="evidence" value="ECO:0000353"/>
    <property type="project" value="FlyBase"/>
</dbReference>
<dbReference type="GO" id="GO:0070679">
    <property type="term" value="F:inositol 1,4,5 trisphosphate binding"/>
    <property type="evidence" value="ECO:0000318"/>
    <property type="project" value="GO_Central"/>
</dbReference>
<dbReference type="GO" id="GO:0005261">
    <property type="term" value="F:monoatomic cation channel activity"/>
    <property type="evidence" value="ECO:0000314"/>
    <property type="project" value="FlyBase"/>
</dbReference>
<dbReference type="GO" id="GO:0015075">
    <property type="term" value="F:monoatomic ion transmembrane transporter activity"/>
    <property type="evidence" value="ECO:0000303"/>
    <property type="project" value="UniProtKB"/>
</dbReference>
<dbReference type="GO" id="GO:0046982">
    <property type="term" value="F:protein heterodimerization activity"/>
    <property type="evidence" value="ECO:0000353"/>
    <property type="project" value="UniProtKB"/>
</dbReference>
<dbReference type="GO" id="GO:0015279">
    <property type="term" value="F:store-operated calcium channel activity"/>
    <property type="evidence" value="ECO:0000318"/>
    <property type="project" value="GO_Central"/>
</dbReference>
<dbReference type="GO" id="GO:0007589">
    <property type="term" value="P:body fluid secretion"/>
    <property type="evidence" value="ECO:0000315"/>
    <property type="project" value="FlyBase"/>
</dbReference>
<dbReference type="GO" id="GO:0070588">
    <property type="term" value="P:calcium ion transmembrane transport"/>
    <property type="evidence" value="ECO:0000316"/>
    <property type="project" value="FlyBase"/>
</dbReference>
<dbReference type="GO" id="GO:0006816">
    <property type="term" value="P:calcium ion transport"/>
    <property type="evidence" value="ECO:0000314"/>
    <property type="project" value="FlyBase"/>
</dbReference>
<dbReference type="GO" id="GO:0019722">
    <property type="term" value="P:calcium-mediated signaling"/>
    <property type="evidence" value="ECO:0000315"/>
    <property type="project" value="FlyBase"/>
</dbReference>
<dbReference type="GO" id="GO:0071454">
    <property type="term" value="P:cellular response to anoxia"/>
    <property type="evidence" value="ECO:0000316"/>
    <property type="project" value="FlyBase"/>
</dbReference>
<dbReference type="GO" id="GO:0050908">
    <property type="term" value="P:detection of light stimulus involved in visual perception"/>
    <property type="evidence" value="ECO:0000250"/>
    <property type="project" value="UniProtKB"/>
</dbReference>
<dbReference type="GO" id="GO:0006812">
    <property type="term" value="P:monoatomic cation transport"/>
    <property type="evidence" value="ECO:0000314"/>
    <property type="project" value="FlyBase"/>
</dbReference>
<dbReference type="GO" id="GO:0006811">
    <property type="term" value="P:monoatomic ion transport"/>
    <property type="evidence" value="ECO:0000303"/>
    <property type="project" value="UniProtKB"/>
</dbReference>
<dbReference type="GO" id="GO:0007603">
    <property type="term" value="P:phototransduction, visible light"/>
    <property type="evidence" value="ECO:0000315"/>
    <property type="project" value="FlyBase"/>
</dbReference>
<dbReference type="GO" id="GO:0051480">
    <property type="term" value="P:regulation of cytosolic calcium ion concentration"/>
    <property type="evidence" value="ECO:0000318"/>
    <property type="project" value="GO_Central"/>
</dbReference>
<dbReference type="GO" id="GO:0009416">
    <property type="term" value="P:response to light stimulus"/>
    <property type="evidence" value="ECO:0000304"/>
    <property type="project" value="FlyBase"/>
</dbReference>
<dbReference type="GO" id="GO:0007605">
    <property type="term" value="P:sensory perception of sound"/>
    <property type="evidence" value="ECO:0000315"/>
    <property type="project" value="FlyBase"/>
</dbReference>
<dbReference type="FunFam" id="1.25.40.20:FF:000221">
    <property type="entry name" value="Transient receptor potential-gamma protein"/>
    <property type="match status" value="1"/>
</dbReference>
<dbReference type="Gene3D" id="1.25.40.20">
    <property type="entry name" value="Ankyrin repeat-containing domain"/>
    <property type="match status" value="1"/>
</dbReference>
<dbReference type="InterPro" id="IPR002110">
    <property type="entry name" value="Ankyrin_rpt"/>
</dbReference>
<dbReference type="InterPro" id="IPR036770">
    <property type="entry name" value="Ankyrin_rpt-contain_sf"/>
</dbReference>
<dbReference type="InterPro" id="IPR005821">
    <property type="entry name" value="Ion_trans_dom"/>
</dbReference>
<dbReference type="InterPro" id="IPR013555">
    <property type="entry name" value="TRP_dom"/>
</dbReference>
<dbReference type="InterPro" id="IPR002153">
    <property type="entry name" value="TRPC_channel"/>
</dbReference>
<dbReference type="NCBIfam" id="TIGR00870">
    <property type="entry name" value="trp"/>
    <property type="match status" value="1"/>
</dbReference>
<dbReference type="PANTHER" id="PTHR10117">
    <property type="entry name" value="TRANSIENT RECEPTOR POTENTIAL CHANNEL"/>
    <property type="match status" value="1"/>
</dbReference>
<dbReference type="PANTHER" id="PTHR10117:SF47">
    <property type="entry name" value="TRANSIENT-RECEPTOR-POTENTIAL-LIKE PROTEIN"/>
    <property type="match status" value="1"/>
</dbReference>
<dbReference type="Pfam" id="PF00023">
    <property type="entry name" value="Ank"/>
    <property type="match status" value="1"/>
</dbReference>
<dbReference type="Pfam" id="PF12796">
    <property type="entry name" value="Ank_2"/>
    <property type="match status" value="1"/>
</dbReference>
<dbReference type="Pfam" id="PF00520">
    <property type="entry name" value="Ion_trans"/>
    <property type="match status" value="1"/>
</dbReference>
<dbReference type="Pfam" id="PF08344">
    <property type="entry name" value="TRP_2"/>
    <property type="match status" value="1"/>
</dbReference>
<dbReference type="PRINTS" id="PR01097">
    <property type="entry name" value="TRNSRECEPTRP"/>
</dbReference>
<dbReference type="SMART" id="SM00248">
    <property type="entry name" value="ANK"/>
    <property type="match status" value="2"/>
</dbReference>
<dbReference type="SMART" id="SM01420">
    <property type="entry name" value="TRP_2"/>
    <property type="match status" value="1"/>
</dbReference>
<dbReference type="SUPFAM" id="SSF48403">
    <property type="entry name" value="Ankyrin repeat"/>
    <property type="match status" value="1"/>
</dbReference>
<dbReference type="PROSITE" id="PS50297">
    <property type="entry name" value="ANK_REP_REGION"/>
    <property type="match status" value="1"/>
</dbReference>
<dbReference type="PROSITE" id="PS50088">
    <property type="entry name" value="ANK_REPEAT"/>
    <property type="match status" value="1"/>
</dbReference>
<comment type="function">
    <text evidence="4 6 8 10 11">A light-sensitive calcium channel that is required for inositide-mediated Ca(2+) entry in the retina during phospholipase C (PLC)-mediated phototransduction. Required for vision in the dark and in dim light. Binds calmodulin. Trp and trpl act together in the light response, although it is unclear whether as heteromultimers or distinct units. Also forms a functional cation channel with Trpgamma. Activated by fatty acids, metabolic stress, inositols and GTP-binding proteins.</text>
</comment>
<comment type="subunit">
    <text evidence="3 5 9">Forms heteromultimers with Trpgamma and, to a lower extent, with trp. Interacts with Fkbp59 in vivo and is found in the inaD signaling complex.</text>
</comment>
<comment type="subcellular location">
    <subcellularLocation>
        <location evidence="6 10">Membrane</location>
        <topology evidence="6 10">Multi-pass membrane protein</topology>
    </subcellularLocation>
    <subcellularLocation>
        <location evidence="6 7">Cell projection</location>
        <location evidence="6 7">Rhabdomere membrane</location>
        <topology evidence="12">Multi-pass membrane protein</topology>
    </subcellularLocation>
    <text>In the dark, there is 20 fold more rhabdomeral trpl protein forming plasma membrane channels than in the light. In the light, the protein translocates to an intracellular compartment. Protein levels remain unchanged in light and dark conditions.</text>
</comment>
<comment type="tissue specificity">
    <text evidence="7">Expressed predominantly in the rhabdomeres of photoreceptor cells.</text>
</comment>
<comment type="domain">
    <text>Binding of calmodulin to binding site 1 is Ca(2+) dependent, whereas binding of calmodulin to site 2 is Ca(2+) independent.</text>
</comment>
<comment type="similarity">
    <text evidence="12">Belongs to the transient receptor (TC 1.A.4) family. STrpC subfamily.</text>
</comment>
<comment type="sequence caution" evidence="12">
    <conflict type="miscellaneous discrepancy">
        <sequence resource="EMBL-CDS" id="AAN71152"/>
    </conflict>
    <text>Intron retention.</text>
</comment>
<organism>
    <name type="scientific">Drosophila melanogaster</name>
    <name type="common">Fruit fly</name>
    <dbReference type="NCBI Taxonomy" id="7227"/>
    <lineage>
        <taxon>Eukaryota</taxon>
        <taxon>Metazoa</taxon>
        <taxon>Ecdysozoa</taxon>
        <taxon>Arthropoda</taxon>
        <taxon>Hexapoda</taxon>
        <taxon>Insecta</taxon>
        <taxon>Pterygota</taxon>
        <taxon>Neoptera</taxon>
        <taxon>Endopterygota</taxon>
        <taxon>Diptera</taxon>
        <taxon>Brachycera</taxon>
        <taxon>Muscomorpha</taxon>
        <taxon>Ephydroidea</taxon>
        <taxon>Drosophilidae</taxon>
        <taxon>Drosophila</taxon>
        <taxon>Sophophora</taxon>
    </lineage>
</organism>
<evidence type="ECO:0000255" key="1"/>
<evidence type="ECO:0000256" key="2">
    <source>
        <dbReference type="SAM" id="MobiDB-lite"/>
    </source>
</evidence>
<evidence type="ECO:0000269" key="3">
    <source>
    </source>
</evidence>
<evidence type="ECO:0000269" key="4">
    <source>
    </source>
</evidence>
<evidence type="ECO:0000269" key="5">
    <source>
    </source>
</evidence>
<evidence type="ECO:0000269" key="6">
    <source>
    </source>
</evidence>
<evidence type="ECO:0000269" key="7">
    <source>
    </source>
</evidence>
<evidence type="ECO:0000269" key="8">
    <source>
    </source>
</evidence>
<evidence type="ECO:0000269" key="9">
    <source>
    </source>
</evidence>
<evidence type="ECO:0000269" key="10">
    <source>
    </source>
</evidence>
<evidence type="ECO:0000269" key="11">
    <source>
    </source>
</evidence>
<evidence type="ECO:0000305" key="12"/>
<accession>P48994</accession>
<accession>C6TPC1</accession>
<accession>Q0E9E3</accession>
<accession>Q8IH62</accession>
<accession>Q8MKU9</accession>
<accession>Q9V5B2</accession>
<gene>
    <name type="primary">trpl</name>
    <name type="ORF">CG18345</name>
</gene>
<reference key="1">
    <citation type="journal article" date="1992" name="Neuron">
        <title>Identification of a Drosophila gene encoding a calmodulin-binding protein with homology to the trp phototransduction gene.</title>
        <authorList>
            <person name="Phillips A.M."/>
            <person name="Bull A.L."/>
            <person name="Kelly L.E."/>
        </authorList>
    </citation>
    <scope>NUCLEOTIDE SEQUENCE [MRNA]</scope>
    <scope>CALMODULIN-BINDING</scope>
    <scope>SUBCELLULAR LOCATION</scope>
    <scope>TISSUE SPECIFICITY</scope>
    <source>
        <strain>Oregon-R</strain>
    </source>
</reference>
<reference key="2">
    <citation type="journal article" date="2000" name="Science">
        <title>The genome sequence of Drosophila melanogaster.</title>
        <authorList>
            <person name="Adams M.D."/>
            <person name="Celniker S.E."/>
            <person name="Holt R.A."/>
            <person name="Evans C.A."/>
            <person name="Gocayne J.D."/>
            <person name="Amanatides P.G."/>
            <person name="Scherer S.E."/>
            <person name="Li P.W."/>
            <person name="Hoskins R.A."/>
            <person name="Galle R.F."/>
            <person name="George R.A."/>
            <person name="Lewis S.E."/>
            <person name="Richards S."/>
            <person name="Ashburner M."/>
            <person name="Henderson S.N."/>
            <person name="Sutton G.G."/>
            <person name="Wortman J.R."/>
            <person name="Yandell M.D."/>
            <person name="Zhang Q."/>
            <person name="Chen L.X."/>
            <person name="Brandon R.C."/>
            <person name="Rogers Y.-H.C."/>
            <person name="Blazej R.G."/>
            <person name="Champe M."/>
            <person name="Pfeiffer B.D."/>
            <person name="Wan K.H."/>
            <person name="Doyle C."/>
            <person name="Baxter E.G."/>
            <person name="Helt G."/>
            <person name="Nelson C.R."/>
            <person name="Miklos G.L.G."/>
            <person name="Abril J.F."/>
            <person name="Agbayani A."/>
            <person name="An H.-J."/>
            <person name="Andrews-Pfannkoch C."/>
            <person name="Baldwin D."/>
            <person name="Ballew R.M."/>
            <person name="Basu A."/>
            <person name="Baxendale J."/>
            <person name="Bayraktaroglu L."/>
            <person name="Beasley E.M."/>
            <person name="Beeson K.Y."/>
            <person name="Benos P.V."/>
            <person name="Berman B.P."/>
            <person name="Bhandari D."/>
            <person name="Bolshakov S."/>
            <person name="Borkova D."/>
            <person name="Botchan M.R."/>
            <person name="Bouck J."/>
            <person name="Brokstein P."/>
            <person name="Brottier P."/>
            <person name="Burtis K.C."/>
            <person name="Busam D.A."/>
            <person name="Butler H."/>
            <person name="Cadieu E."/>
            <person name="Center A."/>
            <person name="Chandra I."/>
            <person name="Cherry J.M."/>
            <person name="Cawley S."/>
            <person name="Dahlke C."/>
            <person name="Davenport L.B."/>
            <person name="Davies P."/>
            <person name="de Pablos B."/>
            <person name="Delcher A."/>
            <person name="Deng Z."/>
            <person name="Mays A.D."/>
            <person name="Dew I."/>
            <person name="Dietz S.M."/>
            <person name="Dodson K."/>
            <person name="Doup L.E."/>
            <person name="Downes M."/>
            <person name="Dugan-Rocha S."/>
            <person name="Dunkov B.C."/>
            <person name="Dunn P."/>
            <person name="Durbin K.J."/>
            <person name="Evangelista C.C."/>
            <person name="Ferraz C."/>
            <person name="Ferriera S."/>
            <person name="Fleischmann W."/>
            <person name="Fosler C."/>
            <person name="Gabrielian A.E."/>
            <person name="Garg N.S."/>
            <person name="Gelbart W.M."/>
            <person name="Glasser K."/>
            <person name="Glodek A."/>
            <person name="Gong F."/>
            <person name="Gorrell J.H."/>
            <person name="Gu Z."/>
            <person name="Guan P."/>
            <person name="Harris M."/>
            <person name="Harris N.L."/>
            <person name="Harvey D.A."/>
            <person name="Heiman T.J."/>
            <person name="Hernandez J.R."/>
            <person name="Houck J."/>
            <person name="Hostin D."/>
            <person name="Houston K.A."/>
            <person name="Howland T.J."/>
            <person name="Wei M.-H."/>
            <person name="Ibegwam C."/>
            <person name="Jalali M."/>
            <person name="Kalush F."/>
            <person name="Karpen G.H."/>
            <person name="Ke Z."/>
            <person name="Kennison J.A."/>
            <person name="Ketchum K.A."/>
            <person name="Kimmel B.E."/>
            <person name="Kodira C.D."/>
            <person name="Kraft C.L."/>
            <person name="Kravitz S."/>
            <person name="Kulp D."/>
            <person name="Lai Z."/>
            <person name="Lasko P."/>
            <person name="Lei Y."/>
            <person name="Levitsky A.A."/>
            <person name="Li J.H."/>
            <person name="Li Z."/>
            <person name="Liang Y."/>
            <person name="Lin X."/>
            <person name="Liu X."/>
            <person name="Mattei B."/>
            <person name="McIntosh T.C."/>
            <person name="McLeod M.P."/>
            <person name="McPherson D."/>
            <person name="Merkulov G."/>
            <person name="Milshina N.V."/>
            <person name="Mobarry C."/>
            <person name="Morris J."/>
            <person name="Moshrefi A."/>
            <person name="Mount S.M."/>
            <person name="Moy M."/>
            <person name="Murphy B."/>
            <person name="Murphy L."/>
            <person name="Muzny D.M."/>
            <person name="Nelson D.L."/>
            <person name="Nelson D.R."/>
            <person name="Nelson K.A."/>
            <person name="Nixon K."/>
            <person name="Nusskern D.R."/>
            <person name="Pacleb J.M."/>
            <person name="Palazzolo M."/>
            <person name="Pittman G.S."/>
            <person name="Pan S."/>
            <person name="Pollard J."/>
            <person name="Puri V."/>
            <person name="Reese M.G."/>
            <person name="Reinert K."/>
            <person name="Remington K."/>
            <person name="Saunders R.D.C."/>
            <person name="Scheeler F."/>
            <person name="Shen H."/>
            <person name="Shue B.C."/>
            <person name="Siden-Kiamos I."/>
            <person name="Simpson M."/>
            <person name="Skupski M.P."/>
            <person name="Smith T.J."/>
            <person name="Spier E."/>
            <person name="Spradling A.C."/>
            <person name="Stapleton M."/>
            <person name="Strong R."/>
            <person name="Sun E."/>
            <person name="Svirskas R."/>
            <person name="Tector C."/>
            <person name="Turner R."/>
            <person name="Venter E."/>
            <person name="Wang A.H."/>
            <person name="Wang X."/>
            <person name="Wang Z.-Y."/>
            <person name="Wassarman D.A."/>
            <person name="Weinstock G.M."/>
            <person name="Weissenbach J."/>
            <person name="Williams S.M."/>
            <person name="Woodage T."/>
            <person name="Worley K.C."/>
            <person name="Wu D."/>
            <person name="Yang S."/>
            <person name="Yao Q.A."/>
            <person name="Ye J."/>
            <person name="Yeh R.-F."/>
            <person name="Zaveri J.S."/>
            <person name="Zhan M."/>
            <person name="Zhang G."/>
            <person name="Zhao Q."/>
            <person name="Zheng L."/>
            <person name="Zheng X.H."/>
            <person name="Zhong F.N."/>
            <person name="Zhong W."/>
            <person name="Zhou X."/>
            <person name="Zhu S.C."/>
            <person name="Zhu X."/>
            <person name="Smith H.O."/>
            <person name="Gibbs R.A."/>
            <person name="Myers E.W."/>
            <person name="Rubin G.M."/>
            <person name="Venter J.C."/>
        </authorList>
    </citation>
    <scope>NUCLEOTIDE SEQUENCE [LARGE SCALE GENOMIC DNA]</scope>
    <source>
        <strain>Berkeley</strain>
    </source>
</reference>
<reference key="3">
    <citation type="journal article" date="2002" name="Genome Biol.">
        <title>Annotation of the Drosophila melanogaster euchromatic genome: a systematic review.</title>
        <authorList>
            <person name="Misra S."/>
            <person name="Crosby M.A."/>
            <person name="Mungall C.J."/>
            <person name="Matthews B.B."/>
            <person name="Campbell K.S."/>
            <person name="Hradecky P."/>
            <person name="Huang Y."/>
            <person name="Kaminker J.S."/>
            <person name="Millburn G.H."/>
            <person name="Prochnik S.E."/>
            <person name="Smith C.D."/>
            <person name="Tupy J.L."/>
            <person name="Whitfield E.J."/>
            <person name="Bayraktaroglu L."/>
            <person name="Berman B.P."/>
            <person name="Bettencourt B.R."/>
            <person name="Celniker S.E."/>
            <person name="de Grey A.D.N.J."/>
            <person name="Drysdale R.A."/>
            <person name="Harris N.L."/>
            <person name="Richter J."/>
            <person name="Russo S."/>
            <person name="Schroeder A.J."/>
            <person name="Shu S.Q."/>
            <person name="Stapleton M."/>
            <person name="Yamada C."/>
            <person name="Ashburner M."/>
            <person name="Gelbart W.M."/>
            <person name="Rubin G.M."/>
            <person name="Lewis S.E."/>
        </authorList>
    </citation>
    <scope>GENOME REANNOTATION</scope>
    <source>
        <strain>Berkeley</strain>
    </source>
</reference>
<reference key="4">
    <citation type="journal article" date="2002" name="Genome Biol.">
        <title>A Drosophila full-length cDNA resource.</title>
        <authorList>
            <person name="Stapleton M."/>
            <person name="Carlson J.W."/>
            <person name="Brokstein P."/>
            <person name="Yu C."/>
            <person name="Champe M."/>
            <person name="George R.A."/>
            <person name="Guarin H."/>
            <person name="Kronmiller B."/>
            <person name="Pacleb J.M."/>
            <person name="Park S."/>
            <person name="Wan K.H."/>
            <person name="Rubin G.M."/>
            <person name="Celniker S.E."/>
        </authorList>
    </citation>
    <scope>NUCLEOTIDE SEQUENCE [LARGE SCALE MRNA]</scope>
    <source>
        <strain>Berkeley</strain>
        <tissue>Head</tissue>
    </source>
</reference>
<reference key="5">
    <citation type="submission" date="2009-08" db="EMBL/GenBank/DDBJ databases">
        <authorList>
            <person name="Carlson J."/>
            <person name="Booth B."/>
            <person name="Frise E."/>
            <person name="Park S."/>
            <person name="Wan K."/>
            <person name="Yu C."/>
            <person name="Celniker S."/>
        </authorList>
    </citation>
    <scope>NUCLEOTIDE SEQUENCE [LARGE SCALE MRNA]</scope>
    <source>
        <strain>Berkeley</strain>
    </source>
</reference>
<reference key="6">
    <citation type="journal article" date="1996" name="Biochem. J.">
        <title>Identification and characterization of two distinct calmodulin-binding sites in the Trpl ion-channel protein of Drosophila melanogaster.</title>
        <authorList>
            <person name="Warr C.G."/>
            <person name="Kelly L.E."/>
        </authorList>
    </citation>
    <scope>CALMODULIN-BINDING</scope>
</reference>
<reference key="7">
    <citation type="journal article" date="1997" name="Cell">
        <title>Coassembly of TRP and TRPL produces a distinct store-operated conductance.</title>
        <authorList>
            <person name="Xu X.-Z.S."/>
            <person name="Li H.-S."/>
            <person name="Guggino W.B."/>
            <person name="Montell C."/>
        </authorList>
    </citation>
    <scope>INTERACTION WITH TRP</scope>
</reference>
<reference key="8">
    <citation type="journal article" date="1998" name="Biochem. J.">
        <title>The role of calmodulin-binding sites in the regulation of the Drosophila TRPL cation channel expressed in Xenopus laevis oocytes by ca2+, inositol 1,4,5-trisphosphate and GTP-binding proteins.</title>
        <authorList>
            <person name="Lan L."/>
            <person name="Brereton H."/>
            <person name="Barritt G.J."/>
        </authorList>
    </citation>
    <scope>FUNCTION</scope>
    <scope>SUBCELLULAR LOCATION</scope>
    <scope>MUTAGENESIS OF TRP-713 AND TRP-814</scope>
</reference>
<reference key="9">
    <citation type="journal article" date="1999" name="FEBS Lett.">
        <title>Ca2+-dependent interaction of the trpl cation channel and calmodulin.</title>
        <authorList>
            <person name="Trost C."/>
            <person name="Marquart A."/>
            <person name="Zimmer S."/>
            <person name="Philipp S."/>
            <person name="Cavalie A."/>
            <person name="Flockerzi V."/>
        </authorList>
    </citation>
    <scope>CALMODULIN-BINDING</scope>
</reference>
<reference key="10">
    <citation type="journal article" date="1999" name="Nature">
        <title>Polyunsaturated fatty acids activate the Drosophila light-sensitive channels TRP and TRPL.</title>
        <authorList>
            <person name="Chyb S."/>
            <person name="Raghu P."/>
            <person name="Hardie R.C."/>
        </authorList>
    </citation>
    <scope>FUNCTION</scope>
</reference>
<reference key="11">
    <citation type="journal article" date="2000" name="J. Neurosci.">
        <title>Metabolic stress reversibly activates the Drosophila light-sensitive channels TRP and TRPL in vivo.</title>
        <authorList>
            <person name="Agam K."/>
            <person name="von Campenhausen M."/>
            <person name="Levy S."/>
            <person name="Ben-Ami H.C."/>
            <person name="Cook B."/>
            <person name="Kirschfeld K."/>
            <person name="Minke B."/>
        </authorList>
    </citation>
    <scope>FUNCTION</scope>
</reference>
<reference key="12">
    <citation type="journal article" date="1996" name="EMBO J.">
        <title>Direct activation of trpl cation channels by G alpha11 subunits.</title>
        <authorList>
            <person name="Obukhov A.G."/>
            <person name="Harteneck C."/>
            <person name="Zobel A."/>
            <person name="Harhammer R."/>
            <person name="Kalkbrenner F."/>
            <person name="Leopoldt D."/>
            <person name="Luckhoff A."/>
            <person name="Nurnberg B."/>
            <person name="Schultz G."/>
        </authorList>
    </citation>
    <scope>FUNCTION</scope>
</reference>
<reference key="13">
    <citation type="journal article" date="2000" name="Neuron">
        <title>TRPgamma, a Drosophila TRP-related subunit, forms a regulated cation channel with TRPL.</title>
        <authorList>
            <person name="Xu X.-Z.S."/>
            <person name="Chien F."/>
            <person name="Butler A."/>
            <person name="Salkoff L."/>
            <person name="Montell C."/>
        </authorList>
    </citation>
    <scope>INTERACTION WITH TRPGAMMA</scope>
</reference>
<reference key="14">
    <citation type="journal article" date="2001" name="J. Biol. Chem.">
        <title>Regulation of Drosophila TRPL channels by immunophilin FKBP59.</title>
        <authorList>
            <person name="Goel M."/>
            <person name="Garcia R."/>
            <person name="Estacion M."/>
            <person name="Schilling W.P."/>
        </authorList>
    </citation>
    <scope>INTERACTION WITH FKBP59</scope>
    <scope>IDENTIFICATION IN A COMPLEX WITH INAD</scope>
    <scope>MUTAGENESIS OF PRO-702 AND PRO-709</scope>
</reference>
<reference key="15">
    <citation type="journal article" date="2002" name="Neuron">
        <title>Light-regulated subcellular translocation of Drosophila TRPL channels induces long-term adaptation and modifies the light-induced current.</title>
        <authorList>
            <person name="Baehner M."/>
            <person name="Frechter S."/>
            <person name="Da Silva N."/>
            <person name="Minke B."/>
            <person name="Paulsen R."/>
            <person name="Huber A."/>
        </authorList>
    </citation>
    <scope>FUNCTION</scope>
    <scope>SUBCELLULAR LOCATION</scope>
</reference>
<reference key="16">
    <citation type="journal article" date="2001" name="J. Exp. Biol.">
        <title>Phototransduction in Drosophila melanogaster.</title>
        <authorList>
            <person name="Hardie R.C."/>
        </authorList>
    </citation>
    <scope>REVIEW</scope>
</reference>
<name>TRPL_DROME</name>